<accession>B1AJN5</accession>
<proteinExistence type="inferred from homology"/>
<reference key="1">
    <citation type="submission" date="2008-02" db="EMBL/GenBank/DDBJ databases">
        <title>Genome sequence of Ureaplasma parvum serovar 3.</title>
        <authorList>
            <person name="Methe B.A."/>
            <person name="Glass J."/>
            <person name="Waites K."/>
            <person name="Shrivastava S."/>
        </authorList>
    </citation>
    <scope>NUCLEOTIDE SEQUENCE [LARGE SCALE GENOMIC DNA]</scope>
    <source>
        <strain>ATCC 27815 / 27 / NCTC 11736</strain>
    </source>
</reference>
<evidence type="ECO:0000255" key="1">
    <source>
        <dbReference type="HAMAP-Rule" id="MF_00124"/>
    </source>
</evidence>
<organism>
    <name type="scientific">Ureaplasma parvum serovar 3 (strain ATCC 27815 / 27 / NCTC 11736)</name>
    <dbReference type="NCBI Taxonomy" id="505682"/>
    <lineage>
        <taxon>Bacteria</taxon>
        <taxon>Bacillati</taxon>
        <taxon>Mycoplasmatota</taxon>
        <taxon>Mycoplasmoidales</taxon>
        <taxon>Mycoplasmoidaceae</taxon>
        <taxon>Ureaplasma</taxon>
    </lineage>
</organism>
<protein>
    <recommendedName>
        <fullName evidence="1">Thymidine kinase</fullName>
        <ecNumber evidence="1">2.7.1.21</ecNumber>
    </recommendedName>
</protein>
<sequence length="223" mass="25367">MAKVNAFSKKIGWIELITGPMFAGKTAELIRRLHRLEYADVKYLVFKPKIDTRSIRNIQSRTGTSLPSVEVESAPEILNYIMSNSFNDETKVIGIDEVQFFDDRICEVANILAENGFVVIISGLDKNFKGEPFGPIAKLFTYADKITKLTAICNECGAEATHSLRKIDGKHADYNDDIVKIGCQEFYSAVCRHHHKVPNRPYLNSNSEEFIKFFKNKKRNKNI</sequence>
<gene>
    <name evidence="1" type="primary">tdk</name>
    <name type="ordered locus">UPA3_0634</name>
</gene>
<comment type="catalytic activity">
    <reaction evidence="1">
        <text>thymidine + ATP = dTMP + ADP + H(+)</text>
        <dbReference type="Rhea" id="RHEA:19129"/>
        <dbReference type="ChEBI" id="CHEBI:15378"/>
        <dbReference type="ChEBI" id="CHEBI:17748"/>
        <dbReference type="ChEBI" id="CHEBI:30616"/>
        <dbReference type="ChEBI" id="CHEBI:63528"/>
        <dbReference type="ChEBI" id="CHEBI:456216"/>
        <dbReference type="EC" id="2.7.1.21"/>
    </reaction>
</comment>
<comment type="subunit">
    <text evidence="1">Homotetramer.</text>
</comment>
<comment type="subcellular location">
    <subcellularLocation>
        <location evidence="1">Cytoplasm</location>
    </subcellularLocation>
</comment>
<comment type="similarity">
    <text evidence="1">Belongs to the thymidine kinase family.</text>
</comment>
<dbReference type="EC" id="2.7.1.21" evidence="1"/>
<dbReference type="EMBL" id="CP000942">
    <property type="protein sequence ID" value="ACA33062.1"/>
    <property type="molecule type" value="Genomic_DNA"/>
</dbReference>
<dbReference type="RefSeq" id="WP_006688765.1">
    <property type="nucleotide sequence ID" value="NC_010503.1"/>
</dbReference>
<dbReference type="SMR" id="B1AJN5"/>
<dbReference type="GeneID" id="29672699"/>
<dbReference type="KEGG" id="upa:UPA3_0634"/>
<dbReference type="HOGENOM" id="CLU_064400_3_0_14"/>
<dbReference type="Proteomes" id="UP000002162">
    <property type="component" value="Chromosome"/>
</dbReference>
<dbReference type="GO" id="GO:0005829">
    <property type="term" value="C:cytosol"/>
    <property type="evidence" value="ECO:0007669"/>
    <property type="project" value="TreeGrafter"/>
</dbReference>
<dbReference type="GO" id="GO:0005524">
    <property type="term" value="F:ATP binding"/>
    <property type="evidence" value="ECO:0007669"/>
    <property type="project" value="UniProtKB-UniRule"/>
</dbReference>
<dbReference type="GO" id="GO:0004797">
    <property type="term" value="F:thymidine kinase activity"/>
    <property type="evidence" value="ECO:0007669"/>
    <property type="project" value="UniProtKB-UniRule"/>
</dbReference>
<dbReference type="GO" id="GO:0008270">
    <property type="term" value="F:zinc ion binding"/>
    <property type="evidence" value="ECO:0007669"/>
    <property type="project" value="UniProtKB-UniRule"/>
</dbReference>
<dbReference type="GO" id="GO:0071897">
    <property type="term" value="P:DNA biosynthetic process"/>
    <property type="evidence" value="ECO:0007669"/>
    <property type="project" value="UniProtKB-KW"/>
</dbReference>
<dbReference type="GO" id="GO:0046104">
    <property type="term" value="P:thymidine metabolic process"/>
    <property type="evidence" value="ECO:0007669"/>
    <property type="project" value="TreeGrafter"/>
</dbReference>
<dbReference type="Gene3D" id="3.30.60.20">
    <property type="match status" value="1"/>
</dbReference>
<dbReference type="Gene3D" id="3.40.50.300">
    <property type="entry name" value="P-loop containing nucleotide triphosphate hydrolases"/>
    <property type="match status" value="1"/>
</dbReference>
<dbReference type="HAMAP" id="MF_00124">
    <property type="entry name" value="Thymidine_kinase"/>
    <property type="match status" value="1"/>
</dbReference>
<dbReference type="InterPro" id="IPR027417">
    <property type="entry name" value="P-loop_NTPase"/>
</dbReference>
<dbReference type="InterPro" id="IPR001267">
    <property type="entry name" value="Thymidine_kinase"/>
</dbReference>
<dbReference type="InterPro" id="IPR020633">
    <property type="entry name" value="Thymidine_kinase_CS"/>
</dbReference>
<dbReference type="NCBIfam" id="NF003296">
    <property type="entry name" value="PRK04296.1-1"/>
    <property type="match status" value="1"/>
</dbReference>
<dbReference type="PANTHER" id="PTHR11441">
    <property type="entry name" value="THYMIDINE KINASE"/>
    <property type="match status" value="1"/>
</dbReference>
<dbReference type="PANTHER" id="PTHR11441:SF0">
    <property type="entry name" value="THYMIDINE KINASE, CYTOSOLIC"/>
    <property type="match status" value="1"/>
</dbReference>
<dbReference type="Pfam" id="PF00265">
    <property type="entry name" value="TK"/>
    <property type="match status" value="1"/>
</dbReference>
<dbReference type="PIRSF" id="PIRSF035805">
    <property type="entry name" value="TK_cell"/>
    <property type="match status" value="1"/>
</dbReference>
<dbReference type="SUPFAM" id="SSF57716">
    <property type="entry name" value="Glucocorticoid receptor-like (DNA-binding domain)"/>
    <property type="match status" value="1"/>
</dbReference>
<dbReference type="SUPFAM" id="SSF52540">
    <property type="entry name" value="P-loop containing nucleoside triphosphate hydrolases"/>
    <property type="match status" value="1"/>
</dbReference>
<dbReference type="PROSITE" id="PS00603">
    <property type="entry name" value="TK_CELLULAR_TYPE"/>
    <property type="match status" value="1"/>
</dbReference>
<name>KITH_UREP2</name>
<keyword id="KW-0067">ATP-binding</keyword>
<keyword id="KW-0963">Cytoplasm</keyword>
<keyword id="KW-0237">DNA synthesis</keyword>
<keyword id="KW-0418">Kinase</keyword>
<keyword id="KW-0479">Metal-binding</keyword>
<keyword id="KW-0547">Nucleotide-binding</keyword>
<keyword id="KW-0808">Transferase</keyword>
<keyword id="KW-0862">Zinc</keyword>
<feature type="chain" id="PRO_1000076241" description="Thymidine kinase">
    <location>
        <begin position="1"/>
        <end position="223"/>
    </location>
</feature>
<feature type="active site" description="Proton acceptor" evidence="1">
    <location>
        <position position="97"/>
    </location>
</feature>
<feature type="binding site" evidence="1">
    <location>
        <begin position="19"/>
        <end position="26"/>
    </location>
    <ligand>
        <name>ATP</name>
        <dbReference type="ChEBI" id="CHEBI:30616"/>
    </ligand>
</feature>
<feature type="binding site" evidence="1">
    <location>
        <begin position="96"/>
        <end position="99"/>
    </location>
    <ligand>
        <name>ATP</name>
        <dbReference type="ChEBI" id="CHEBI:30616"/>
    </ligand>
</feature>
<feature type="binding site" evidence="1">
    <location>
        <position position="153"/>
    </location>
    <ligand>
        <name>Zn(2+)</name>
        <dbReference type="ChEBI" id="CHEBI:29105"/>
    </ligand>
</feature>
<feature type="binding site" evidence="1">
    <location>
        <position position="156"/>
    </location>
    <ligand>
        <name>Zn(2+)</name>
        <dbReference type="ChEBI" id="CHEBI:29105"/>
    </ligand>
</feature>
<feature type="binding site" evidence="1">
    <location>
        <position position="191"/>
    </location>
    <ligand>
        <name>Zn(2+)</name>
        <dbReference type="ChEBI" id="CHEBI:29105"/>
    </ligand>
</feature>
<feature type="binding site" evidence="1">
    <location>
        <position position="194"/>
    </location>
    <ligand>
        <name>Zn(2+)</name>
        <dbReference type="ChEBI" id="CHEBI:29105"/>
    </ligand>
</feature>